<geneLocation type="mitochondrion"/>
<name>COX2_MAUEX</name>
<dbReference type="EC" id="7.1.1.9"/>
<dbReference type="EMBL" id="X69429">
    <property type="protein sequence ID" value="CAA49204.1"/>
    <property type="molecule type" value="Genomic_DNA"/>
</dbReference>
<dbReference type="PIR" id="S45439">
    <property type="entry name" value="S45439"/>
</dbReference>
<dbReference type="SMR" id="P43377"/>
<dbReference type="GO" id="GO:0005743">
    <property type="term" value="C:mitochondrial inner membrane"/>
    <property type="evidence" value="ECO:0007669"/>
    <property type="project" value="UniProtKB-SubCell"/>
</dbReference>
<dbReference type="GO" id="GO:0005507">
    <property type="term" value="F:copper ion binding"/>
    <property type="evidence" value="ECO:0007669"/>
    <property type="project" value="InterPro"/>
</dbReference>
<dbReference type="GO" id="GO:0004129">
    <property type="term" value="F:cytochrome-c oxidase activity"/>
    <property type="evidence" value="ECO:0007669"/>
    <property type="project" value="UniProtKB-EC"/>
</dbReference>
<dbReference type="GO" id="GO:0042773">
    <property type="term" value="P:ATP synthesis coupled electron transport"/>
    <property type="evidence" value="ECO:0007669"/>
    <property type="project" value="TreeGrafter"/>
</dbReference>
<dbReference type="CDD" id="cd13912">
    <property type="entry name" value="CcO_II_C"/>
    <property type="match status" value="1"/>
</dbReference>
<dbReference type="FunFam" id="1.10.287.90:FF:000004">
    <property type="entry name" value="Cytochrome c oxidase subunit 2"/>
    <property type="match status" value="1"/>
</dbReference>
<dbReference type="FunFam" id="2.60.40.420:FF:000001">
    <property type="entry name" value="Cytochrome c oxidase subunit 2"/>
    <property type="match status" value="1"/>
</dbReference>
<dbReference type="Gene3D" id="1.10.287.90">
    <property type="match status" value="1"/>
</dbReference>
<dbReference type="Gene3D" id="2.60.40.420">
    <property type="entry name" value="Cupredoxins - blue copper proteins"/>
    <property type="match status" value="1"/>
</dbReference>
<dbReference type="InterPro" id="IPR045187">
    <property type="entry name" value="CcO_II"/>
</dbReference>
<dbReference type="InterPro" id="IPR002429">
    <property type="entry name" value="CcO_II-like_C"/>
</dbReference>
<dbReference type="InterPro" id="IPR034210">
    <property type="entry name" value="CcO_II_C"/>
</dbReference>
<dbReference type="InterPro" id="IPR001505">
    <property type="entry name" value="Copper_CuA"/>
</dbReference>
<dbReference type="InterPro" id="IPR008972">
    <property type="entry name" value="Cupredoxin"/>
</dbReference>
<dbReference type="InterPro" id="IPR014222">
    <property type="entry name" value="Cyt_c_oxidase_su2"/>
</dbReference>
<dbReference type="InterPro" id="IPR011759">
    <property type="entry name" value="Cyt_c_oxidase_su2_TM_dom"/>
</dbReference>
<dbReference type="InterPro" id="IPR036257">
    <property type="entry name" value="Cyt_c_oxidase_su2_TM_sf"/>
</dbReference>
<dbReference type="NCBIfam" id="TIGR02866">
    <property type="entry name" value="CoxB"/>
    <property type="match status" value="1"/>
</dbReference>
<dbReference type="PANTHER" id="PTHR22888:SF9">
    <property type="entry name" value="CYTOCHROME C OXIDASE SUBUNIT 2"/>
    <property type="match status" value="1"/>
</dbReference>
<dbReference type="PANTHER" id="PTHR22888">
    <property type="entry name" value="CYTOCHROME C OXIDASE, SUBUNIT II"/>
    <property type="match status" value="1"/>
</dbReference>
<dbReference type="Pfam" id="PF00116">
    <property type="entry name" value="COX2"/>
    <property type="match status" value="1"/>
</dbReference>
<dbReference type="Pfam" id="PF02790">
    <property type="entry name" value="COX2_TM"/>
    <property type="match status" value="1"/>
</dbReference>
<dbReference type="PRINTS" id="PR01166">
    <property type="entry name" value="CYCOXIDASEII"/>
</dbReference>
<dbReference type="SUPFAM" id="SSF49503">
    <property type="entry name" value="Cupredoxins"/>
    <property type="match status" value="1"/>
</dbReference>
<dbReference type="SUPFAM" id="SSF81464">
    <property type="entry name" value="Cytochrome c oxidase subunit II-like, transmembrane region"/>
    <property type="match status" value="1"/>
</dbReference>
<dbReference type="PROSITE" id="PS00078">
    <property type="entry name" value="COX2"/>
    <property type="match status" value="1"/>
</dbReference>
<dbReference type="PROSITE" id="PS50857">
    <property type="entry name" value="COX2_CUA"/>
    <property type="match status" value="1"/>
</dbReference>
<dbReference type="PROSITE" id="PS50999">
    <property type="entry name" value="COX2_TM"/>
    <property type="match status" value="1"/>
</dbReference>
<protein>
    <recommendedName>
        <fullName>Cytochrome c oxidase subunit 2</fullName>
        <ecNumber>7.1.1.9</ecNumber>
    </recommendedName>
    <alternativeName>
        <fullName>Cytochrome c oxidase polypeptide II</fullName>
    </alternativeName>
</protein>
<feature type="signal peptide" evidence="1">
    <location>
        <begin position="1"/>
        <end position="13"/>
    </location>
</feature>
<feature type="chain" id="PRO_0000006041" description="Cytochrome c oxidase subunit 2">
    <location>
        <begin position="14"/>
        <end position="249"/>
    </location>
</feature>
<feature type="topological domain" description="Mitochondrial intermembrane" evidence="3">
    <location>
        <begin position="14"/>
        <end position="40"/>
    </location>
</feature>
<feature type="transmembrane region" description="Helical" evidence="3">
    <location>
        <begin position="41"/>
        <end position="62"/>
    </location>
</feature>
<feature type="topological domain" description="Mitochondrial matrix" evidence="3">
    <location>
        <begin position="63"/>
        <end position="80"/>
    </location>
</feature>
<feature type="transmembrane region" description="Helical" evidence="3">
    <location>
        <begin position="81"/>
        <end position="105"/>
    </location>
</feature>
<feature type="topological domain" description="Mitochondrial intermembrane" evidence="3">
    <location>
        <begin position="106"/>
        <end position="249"/>
    </location>
</feature>
<feature type="binding site" evidence="2">
    <location>
        <position position="184"/>
    </location>
    <ligand>
        <name>Cu cation</name>
        <dbReference type="ChEBI" id="CHEBI:23378"/>
        <label>A1</label>
    </ligand>
</feature>
<feature type="binding site" evidence="2">
    <location>
        <position position="219"/>
    </location>
    <ligand>
        <name>Cu cation</name>
        <dbReference type="ChEBI" id="CHEBI:23378"/>
        <label>A1</label>
    </ligand>
</feature>
<feature type="binding site" evidence="2">
    <location>
        <position position="219"/>
    </location>
    <ligand>
        <name>Cu cation</name>
        <dbReference type="ChEBI" id="CHEBI:23378"/>
        <label>A2</label>
    </ligand>
</feature>
<feature type="binding site" evidence="2">
    <location>
        <position position="221"/>
    </location>
    <ligand>
        <name>Cu cation</name>
        <dbReference type="ChEBI" id="CHEBI:23378"/>
        <label>A2</label>
    </ligand>
</feature>
<feature type="binding site" evidence="2">
    <location>
        <position position="221"/>
    </location>
    <ligand>
        <name>Mg(2+)</name>
        <dbReference type="ChEBI" id="CHEBI:18420"/>
        <note>ligand shared with subunit 1</note>
    </ligand>
</feature>
<feature type="binding site" evidence="2">
    <location>
        <position position="223"/>
    </location>
    <ligand>
        <name>Cu cation</name>
        <dbReference type="ChEBI" id="CHEBI:23378"/>
        <label>A1</label>
    </ligand>
</feature>
<feature type="binding site" evidence="2">
    <location>
        <position position="223"/>
    </location>
    <ligand>
        <name>Cu cation</name>
        <dbReference type="ChEBI" id="CHEBI:23378"/>
        <label>A2</label>
    </ligand>
</feature>
<feature type="binding site" evidence="2">
    <location>
        <position position="227"/>
    </location>
    <ligand>
        <name>Cu cation</name>
        <dbReference type="ChEBI" id="CHEBI:23378"/>
        <label>A2</label>
    </ligand>
</feature>
<feature type="binding site" evidence="2">
    <location>
        <position position="230"/>
    </location>
    <ligand>
        <name>Cu cation</name>
        <dbReference type="ChEBI" id="CHEBI:23378"/>
        <label>A1</label>
    </ligand>
</feature>
<evidence type="ECO:0000250" key="1"/>
<evidence type="ECO:0000250" key="2">
    <source>
        <dbReference type="UniProtKB" id="P00410"/>
    </source>
</evidence>
<evidence type="ECO:0000255" key="3"/>
<evidence type="ECO:0000305" key="4"/>
<organism>
    <name type="scientific">Maudiozyma exigua</name>
    <name type="common">Yeast</name>
    <name type="synonym">Kazachstania exigua</name>
    <dbReference type="NCBI Taxonomy" id="34358"/>
    <lineage>
        <taxon>Eukaryota</taxon>
        <taxon>Fungi</taxon>
        <taxon>Dikarya</taxon>
        <taxon>Ascomycota</taxon>
        <taxon>Saccharomycotina</taxon>
        <taxon>Saccharomycetes</taxon>
        <taxon>Saccharomycetales</taxon>
        <taxon>Saccharomycetaceae</taxon>
        <taxon>Maudiozyma</taxon>
    </lineage>
</organism>
<accession>P43377</accession>
<gene>
    <name type="primary">COX2</name>
</gene>
<sequence length="249" mass="28584">MLNLFQIMNMINNDVPTPYGFYFQDSATPNQEGILELHDNIMFYLVVILGLVSWMLFTIVRTYSRNPMAYKYIKHGQTIEIIWKIFPAVILLTIAFPSFILLYLCDEVISPAMTIKAIGYQWYWKYEYFDFINDNGETIEFESYVIPDSLLEEGQLRLLDTDTSIVVPVDTHIRFIVTAADVIHDFAIPSLGIKVDGTPGRLNQVSTLIQREGVFYGMCSELCGIGHAQMPIKVEAVSLPKFLEWLNEQ</sequence>
<reference key="1">
    <citation type="journal article" date="1994" name="J. Mol. Evol.">
        <title>The structure of the small mitochondrial DNA of Kluyveromyces thermotolerans is likely to reflect the ancestral gene order in fungi.</title>
        <authorList>
            <person name="Clark-Walker G.D."/>
            <person name="Weiller G.F."/>
        </authorList>
    </citation>
    <scope>NUCLEOTIDE SEQUENCE [GENOMIC DNA]</scope>
    <source>
        <strain>ATCC 10599 / BCRC 21524 / CBS 379 / DBVPG 6252 / JCM 1790 / NBRC 1128</strain>
    </source>
</reference>
<proteinExistence type="inferred from homology"/>
<keyword id="KW-0186">Copper</keyword>
<keyword id="KW-0249">Electron transport</keyword>
<keyword id="KW-0460">Magnesium</keyword>
<keyword id="KW-0472">Membrane</keyword>
<keyword id="KW-0479">Metal-binding</keyword>
<keyword id="KW-0496">Mitochondrion</keyword>
<keyword id="KW-0999">Mitochondrion inner membrane</keyword>
<keyword id="KW-0679">Respiratory chain</keyword>
<keyword id="KW-0732">Signal</keyword>
<keyword id="KW-1278">Translocase</keyword>
<keyword id="KW-0812">Transmembrane</keyword>
<keyword id="KW-1133">Transmembrane helix</keyword>
<keyword id="KW-0813">Transport</keyword>
<comment type="function">
    <text evidence="2">Component of the cytochrome c oxidase, the last enzyme in the mitochondrial electron transport chain which drives oxidative phosphorylation. The respiratory chain contains 3 multisubunit complexes succinate dehydrogenase (complex II, CII), ubiquinol-cytochrome c oxidoreductase (cytochrome b-c1 complex, complex III, CIII) and cytochrome c oxidase (complex IV, CIV), that cooperate to transfer electrons derived from NADH and succinate to molecular oxygen, creating an electrochemical gradient over the inner membrane that drives transmembrane transport and the ATP synthase. Cytochrome c oxidase is the component of the respiratory chain that catalyzes the reduction of oxygen to water. Electrons originating from reduced cytochrome c in the intermembrane space (IMS) are transferred via the dinuclear copper A center (CU(A)) of subunit 2 and heme A of subunit 1 to the active site in subunit 1, a binuclear center (BNC) formed by heme A3 and copper B (CU(B)). The BNC reduces molecular oxygen to 2 water molecules using 4 electrons from cytochrome c in the IMS and 4 protons from the mitochondrial matrix.</text>
</comment>
<comment type="catalytic activity">
    <reaction evidence="2">
        <text>4 Fe(II)-[cytochrome c] + O2 + 8 H(+)(in) = 4 Fe(III)-[cytochrome c] + 2 H2O + 4 H(+)(out)</text>
        <dbReference type="Rhea" id="RHEA:11436"/>
        <dbReference type="Rhea" id="RHEA-COMP:10350"/>
        <dbReference type="Rhea" id="RHEA-COMP:14399"/>
        <dbReference type="ChEBI" id="CHEBI:15377"/>
        <dbReference type="ChEBI" id="CHEBI:15378"/>
        <dbReference type="ChEBI" id="CHEBI:15379"/>
        <dbReference type="ChEBI" id="CHEBI:29033"/>
        <dbReference type="ChEBI" id="CHEBI:29034"/>
        <dbReference type="EC" id="7.1.1.9"/>
    </reaction>
    <physiologicalReaction direction="left-to-right" evidence="2">
        <dbReference type="Rhea" id="RHEA:11437"/>
    </physiologicalReaction>
</comment>
<comment type="cofactor">
    <cofactor evidence="2">
        <name>Cu cation</name>
        <dbReference type="ChEBI" id="CHEBI:23378"/>
    </cofactor>
    <text evidence="2">Binds a dinuclear copper A center per subunit.</text>
</comment>
<comment type="subunit">
    <text evidence="2">Component of the cytochrome c oxidase (complex IV, CIV), a multisubunit enzyme composed of a catalytic core of 3 subunits and several supernumerary subunits. The complex exists as a monomer or a dimer and forms supercomplexes (SCs) in the inner mitochondrial membrane with ubiquinol-cytochrome c oxidoreductase (cytochrome b-c1 complex, complex III, CIII).</text>
</comment>
<comment type="subcellular location">
    <subcellularLocation>
        <location evidence="2">Mitochondrion inner membrane</location>
        <topology evidence="2">Multi-pass membrane protein</topology>
    </subcellularLocation>
</comment>
<comment type="PTM">
    <text evidence="1">The signal sequence of COX2 is processed by IMP1.</text>
</comment>
<comment type="similarity">
    <text evidence="4">Belongs to the cytochrome c oxidase subunit 2 family.</text>
</comment>